<protein>
    <recommendedName>
        <fullName>Tubulin beta-2 chain</fullName>
    </recommendedName>
    <alternativeName>
        <fullName>Beta-tubulin class-II</fullName>
    </alternativeName>
</protein>
<evidence type="ECO:0000250" key="1">
    <source>
        <dbReference type="UniProtKB" id="A2AQ07"/>
    </source>
</evidence>
<evidence type="ECO:0000250" key="2">
    <source>
        <dbReference type="UniProtKB" id="P07437"/>
    </source>
</evidence>
<evidence type="ECO:0000250" key="3">
    <source>
        <dbReference type="UniProtKB" id="P68363"/>
    </source>
</evidence>
<evidence type="ECO:0000250" key="4">
    <source>
        <dbReference type="UniProtKB" id="Q13509"/>
    </source>
</evidence>
<evidence type="ECO:0000250" key="5">
    <source>
        <dbReference type="UniProtKB" id="Q2T9S0"/>
    </source>
</evidence>
<evidence type="ECO:0000250" key="6">
    <source>
        <dbReference type="UniProtKB" id="Q71U36"/>
    </source>
</evidence>
<evidence type="ECO:0000256" key="7">
    <source>
        <dbReference type="SAM" id="MobiDB-lite"/>
    </source>
</evidence>
<evidence type="ECO:0000305" key="8"/>
<evidence type="ECO:0007829" key="9">
    <source>
        <dbReference type="PDB" id="5CA1"/>
    </source>
</evidence>
<name>TBB2_CHICK</name>
<sequence>MREIVHIQAGQCGNQIGAKFWEVISDEHGIDPTGSYHGDSDLQLERINVYYNEATGNKYVPRAILVDLEPGTMDSVRSGPFGQIFRPDNFVFGQSGAGNNWAKGHYTEGAELVDSVLDVVRKESESCDCLQGFQLTHSLGGGTGSGMGTLLISKIREEYPDRIMNTFSVMPSPKVSDTVVEPYNATLSVHQLVENTDETYCIDNEALYDICFRTLKLTTPTYGDLNHLVSATMSGVTTCLRFPGQLNADLRKLAVNMVPFPRLHFFMPGFAPLTSRGSQQYRALTVPELTQQMFDSKNMMAACDPRHGRYLTVAAIFRGRMSMKEVDEQMLNVQNKNSSYFVEWIPNNVKTAVCDIPPRGLKMSATFIGNSTAIQELFKRISEQFTAMFRRKAFLHWYTGEGMDEMEFTEAESNMNDLVSEYQQYQDATADEQGEFEEEGEEDEA</sequence>
<keyword id="KW-0002">3D-structure</keyword>
<keyword id="KW-0963">Cytoplasm</keyword>
<keyword id="KW-0206">Cytoskeleton</keyword>
<keyword id="KW-0342">GTP-binding</keyword>
<keyword id="KW-1017">Isopeptide bond</keyword>
<keyword id="KW-0460">Magnesium</keyword>
<keyword id="KW-0479">Metal-binding</keyword>
<keyword id="KW-0493">Microtubule</keyword>
<keyword id="KW-0547">Nucleotide-binding</keyword>
<keyword id="KW-1185">Reference proteome</keyword>
<feature type="chain" id="PRO_0000048264" description="Tubulin beta-2 chain">
    <location>
        <begin position="1"/>
        <end position="445"/>
    </location>
</feature>
<feature type="region of interest" description="Disordered" evidence="7">
    <location>
        <begin position="424"/>
        <end position="445"/>
    </location>
</feature>
<feature type="short sequence motif" description="MREI motif" evidence="2">
    <location>
        <begin position="1"/>
        <end position="4"/>
    </location>
</feature>
<feature type="compositionally biased region" description="Acidic residues" evidence="7">
    <location>
        <begin position="429"/>
        <end position="445"/>
    </location>
</feature>
<feature type="binding site" evidence="4">
    <location>
        <position position="11"/>
    </location>
    <ligand>
        <name>GTP</name>
        <dbReference type="ChEBI" id="CHEBI:37565"/>
    </ligand>
</feature>
<feature type="binding site" evidence="3">
    <location>
        <position position="69"/>
    </location>
    <ligand>
        <name>GTP</name>
        <dbReference type="ChEBI" id="CHEBI:37565"/>
    </ligand>
</feature>
<feature type="binding site" evidence="3">
    <location>
        <position position="69"/>
    </location>
    <ligand>
        <name>Mg(2+)</name>
        <dbReference type="ChEBI" id="CHEBI:18420"/>
    </ligand>
</feature>
<feature type="binding site" evidence="4">
    <location>
        <position position="138"/>
    </location>
    <ligand>
        <name>GTP</name>
        <dbReference type="ChEBI" id="CHEBI:37565"/>
    </ligand>
</feature>
<feature type="binding site" evidence="4">
    <location>
        <position position="142"/>
    </location>
    <ligand>
        <name>GTP</name>
        <dbReference type="ChEBI" id="CHEBI:37565"/>
    </ligand>
</feature>
<feature type="binding site" evidence="4">
    <location>
        <position position="143"/>
    </location>
    <ligand>
        <name>GTP</name>
        <dbReference type="ChEBI" id="CHEBI:37565"/>
    </ligand>
</feature>
<feature type="binding site" evidence="4">
    <location>
        <position position="144"/>
    </location>
    <ligand>
        <name>GTP</name>
        <dbReference type="ChEBI" id="CHEBI:37565"/>
    </ligand>
</feature>
<feature type="binding site" evidence="4">
    <location>
        <position position="204"/>
    </location>
    <ligand>
        <name>GTP</name>
        <dbReference type="ChEBI" id="CHEBI:37565"/>
    </ligand>
</feature>
<feature type="binding site" evidence="4">
    <location>
        <position position="226"/>
    </location>
    <ligand>
        <name>GTP</name>
        <dbReference type="ChEBI" id="CHEBI:37565"/>
    </ligand>
</feature>
<feature type="modified residue" description="5-glutamyl polyglutamate" evidence="5">
    <location>
        <position position="438"/>
    </location>
</feature>
<feature type="strand" evidence="9">
    <location>
        <begin position="4"/>
        <end position="9"/>
    </location>
</feature>
<feature type="helix" evidence="9">
    <location>
        <begin position="10"/>
        <end position="27"/>
    </location>
</feature>
<feature type="helix" evidence="9">
    <location>
        <begin position="41"/>
        <end position="43"/>
    </location>
</feature>
<feature type="turn" evidence="9">
    <location>
        <begin position="44"/>
        <end position="46"/>
    </location>
</feature>
<feature type="helix" evidence="9">
    <location>
        <begin position="47"/>
        <end position="49"/>
    </location>
</feature>
<feature type="strand" evidence="9">
    <location>
        <begin position="51"/>
        <end position="54"/>
    </location>
</feature>
<feature type="turn" evidence="9">
    <location>
        <begin position="55"/>
        <end position="57"/>
    </location>
</feature>
<feature type="strand" evidence="9">
    <location>
        <begin position="58"/>
        <end position="61"/>
    </location>
</feature>
<feature type="strand" evidence="9">
    <location>
        <begin position="63"/>
        <end position="70"/>
    </location>
</feature>
<feature type="helix" evidence="9">
    <location>
        <begin position="71"/>
        <end position="77"/>
    </location>
</feature>
<feature type="helix" evidence="9">
    <location>
        <begin position="82"/>
        <end position="84"/>
    </location>
</feature>
<feature type="helix" evidence="9">
    <location>
        <begin position="87"/>
        <end position="89"/>
    </location>
</feature>
<feature type="strand" evidence="9">
    <location>
        <begin position="90"/>
        <end position="92"/>
    </location>
</feature>
<feature type="helix" evidence="9">
    <location>
        <begin position="101"/>
        <end position="105"/>
    </location>
</feature>
<feature type="helix" evidence="9">
    <location>
        <begin position="108"/>
        <end position="124"/>
    </location>
</feature>
<feature type="strand" evidence="9">
    <location>
        <begin position="132"/>
        <end position="142"/>
    </location>
</feature>
<feature type="helix" evidence="9">
    <location>
        <begin position="143"/>
        <end position="158"/>
    </location>
</feature>
<feature type="strand" evidence="9">
    <location>
        <begin position="162"/>
        <end position="170"/>
    </location>
</feature>
<feature type="helix" evidence="9">
    <location>
        <begin position="181"/>
        <end position="195"/>
    </location>
</feature>
<feature type="strand" evidence="9">
    <location>
        <begin position="197"/>
        <end position="203"/>
    </location>
</feature>
<feature type="helix" evidence="9">
    <location>
        <begin position="204"/>
        <end position="213"/>
    </location>
</feature>
<feature type="helix" evidence="9">
    <location>
        <begin position="222"/>
        <end position="236"/>
    </location>
</feature>
<feature type="helix" evidence="9">
    <location>
        <begin position="238"/>
        <end position="241"/>
    </location>
</feature>
<feature type="helix" evidence="9">
    <location>
        <begin position="250"/>
        <end position="255"/>
    </location>
</feature>
<feature type="strand" evidence="9">
    <location>
        <begin position="265"/>
        <end position="272"/>
    </location>
</feature>
<feature type="helix" evidence="9">
    <location>
        <begin position="286"/>
        <end position="294"/>
    </location>
</feature>
<feature type="helix" evidence="9">
    <location>
        <begin position="296"/>
        <end position="298"/>
    </location>
</feature>
<feature type="strand" evidence="9">
    <location>
        <begin position="299"/>
        <end position="301"/>
    </location>
</feature>
<feature type="helix" evidence="9">
    <location>
        <begin position="305"/>
        <end position="307"/>
    </location>
</feature>
<feature type="strand" evidence="9">
    <location>
        <begin position="310"/>
        <end position="320"/>
    </location>
</feature>
<feature type="helix" evidence="9">
    <location>
        <begin position="323"/>
        <end position="336"/>
    </location>
</feature>
<feature type="strand" evidence="9">
    <location>
        <begin position="343"/>
        <end position="345"/>
    </location>
</feature>
<feature type="strand" evidence="9">
    <location>
        <begin position="349"/>
        <end position="355"/>
    </location>
</feature>
<feature type="strand" evidence="9">
    <location>
        <begin position="362"/>
        <end position="371"/>
    </location>
</feature>
<feature type="helix" evidence="9">
    <location>
        <begin position="372"/>
        <end position="374"/>
    </location>
</feature>
<feature type="helix" evidence="9">
    <location>
        <begin position="375"/>
        <end position="389"/>
    </location>
</feature>
<feature type="turn" evidence="9">
    <location>
        <begin position="390"/>
        <end position="395"/>
    </location>
</feature>
<feature type="helix" evidence="9">
    <location>
        <begin position="396"/>
        <end position="399"/>
    </location>
</feature>
<feature type="turn" evidence="9">
    <location>
        <begin position="400"/>
        <end position="402"/>
    </location>
</feature>
<feature type="helix" evidence="9">
    <location>
        <begin position="405"/>
        <end position="426"/>
    </location>
</feature>
<comment type="function">
    <text>Tubulin is the major constituent of microtubules, a cylinder consisting of laterally associated linear protofilaments composed of alpha- and beta-tubulin heterodimers. Microtubules grow by the addition of GTP-tubulin dimers to the microtubule end, where a stabilizing cap forms. Below the cap, tubulin dimers are in GDP-bound state, owing to GTPase activity of alpha-tubulin.</text>
</comment>
<comment type="cofactor">
    <cofactor evidence="3">
        <name>Mg(2+)</name>
        <dbReference type="ChEBI" id="CHEBI:18420"/>
    </cofactor>
</comment>
<comment type="subunit">
    <text>Dimer of alpha and beta chains. A typical microtubule is a hollow water-filled tube with an outer diameter of 25 nm and an inner diameter of 15 nM. Alpha-beta heterodimers associate head-to-tail to form protofilaments running lengthwise along the microtubule wall with the beta-tubulin subunit facing the microtubule plus end conferring a structural polarity. Microtubules usually have 13 protofilaments but different protofilament numbers can be found in some organisms and specialized cells.</text>
</comment>
<comment type="subcellular location">
    <subcellularLocation>
        <location>Cytoplasm</location>
        <location>Cytoskeleton</location>
    </subcellularLocation>
</comment>
<comment type="tissue specificity">
    <text>Highly expressed in neuronal cells.</text>
</comment>
<comment type="domain">
    <text evidence="2">The MREI motif is common among all beta-tubulin isoforms and may be critical for tubulin autoregulation.</text>
</comment>
<comment type="PTM">
    <text evidence="1">Some glutamate residues at the C-terminus are polyglycylated, resulting in polyglycine chains on the gamma-carboxyl group. Glycylation is mainly limited to tubulin incorporated into axonemes (cilia and flagella) whereas glutamylation is prevalent in neuronal cells, centrioles, axonemes, and the mitotic spindle. Both modifications can coexist on the same protein on adjacent residues, and lowering polyglycylation levels increases polyglutamylation, and reciprocally. The precise function of polyglycylation is still unclear.</text>
</comment>
<comment type="PTM">
    <text evidence="1 6">Some glutamate residues at the C-terminus are polyglutamylated, resulting in polyglutamate chains on the gamma-carboxyl group (By similarity). Polyglutamylation plays a key role in microtubule severing by spastin (SPAST). SPAST preferentially recognizes and acts on microtubules decorated with short polyglutamate tails: severing activity by SPAST increases as the number of glutamates per tubulin rises from one to eight, but decreases beyond this glutamylation threshold (By similarity).</text>
</comment>
<comment type="similarity">
    <text evidence="8">Belongs to the tubulin family.</text>
</comment>
<reference key="1">
    <citation type="journal article" date="1981" name="Nature">
        <title>Nucleotide and corresponding amino acid sequences encoded by alpha and beta tubulin mRNAs.</title>
        <authorList>
            <person name="Valenzuela P."/>
            <person name="Quiroga M."/>
            <person name="Zaldivar J."/>
            <person name="Rutter W.J."/>
            <person name="Kirschner M.W."/>
            <person name="Cleveland D.W."/>
        </authorList>
    </citation>
    <scope>NUCLEOTIDE SEQUENCE [MRNA]</scope>
</reference>
<reference key="2">
    <citation type="journal article" date="1985" name="Mol. Cell. Biol.">
        <title>Apparent gene conversion between beta-tubulin genes yields multiple regulatory pathways for a single beta-tubulin polypeptide isotype.</title>
        <authorList>
            <person name="Sullivan K.F."/>
            <person name="Lau J.T.Y."/>
            <person name="Cleveland D.W."/>
        </authorList>
    </citation>
    <scope>NUCLEOTIDE SEQUENCE [GENOMIC DNA]</scope>
</reference>
<accession>P32882</accession>
<accession>P02555</accession>
<proteinExistence type="evidence at protein level"/>
<dbReference type="EMBL" id="V00389">
    <property type="protein sequence ID" value="CAA23687.1"/>
    <property type="molecule type" value="mRNA"/>
</dbReference>
<dbReference type="EMBL" id="M11443">
    <property type="protein sequence ID" value="AAA49125.1"/>
    <property type="molecule type" value="Genomic_DNA"/>
</dbReference>
<dbReference type="PIR" id="A02974">
    <property type="entry name" value="UBCHB"/>
</dbReference>
<dbReference type="RefSeq" id="NP_001004400.1">
    <property type="nucleotide sequence ID" value="NM_001004400.3"/>
</dbReference>
<dbReference type="PDB" id="5CA1">
    <property type="method" value="X-ray"/>
    <property type="resolution" value="2.40 A"/>
    <property type="chains" value="B/D=1-445"/>
</dbReference>
<dbReference type="PDBsum" id="5CA1"/>
<dbReference type="SMR" id="P32882"/>
<dbReference type="FunCoup" id="P32882">
    <property type="interactions" value="1357"/>
</dbReference>
<dbReference type="IntAct" id="P32882">
    <property type="interactions" value="1"/>
</dbReference>
<dbReference type="STRING" id="9031.ENSGALP00000020884"/>
<dbReference type="PaxDb" id="9031-ENSGALP00000020884"/>
<dbReference type="Ensembl" id="ENSGALT00010027214.1">
    <property type="protein sequence ID" value="ENSGALP00010015496.1"/>
    <property type="gene ID" value="ENSGALG00010011378.1"/>
</dbReference>
<dbReference type="GeneID" id="420883"/>
<dbReference type="KEGG" id="gga:420883"/>
<dbReference type="CTD" id="347733"/>
<dbReference type="VEuPathDB" id="HostDB:geneid_420883"/>
<dbReference type="eggNOG" id="KOG1375">
    <property type="taxonomic scope" value="Eukaryota"/>
</dbReference>
<dbReference type="GeneTree" id="ENSGT00940000154150"/>
<dbReference type="HOGENOM" id="CLU_015718_1_1_1"/>
<dbReference type="InParanoid" id="P32882"/>
<dbReference type="OMA" id="DICFRTM"/>
<dbReference type="OrthoDB" id="1662883at2759"/>
<dbReference type="EvolutionaryTrace" id="P32882"/>
<dbReference type="PRO" id="PR:P32882"/>
<dbReference type="Proteomes" id="UP000000539">
    <property type="component" value="Chromosome 2"/>
</dbReference>
<dbReference type="Bgee" id="ENSGALG00000012821">
    <property type="expression patterns" value="Expressed in brain and 13 other cell types or tissues"/>
</dbReference>
<dbReference type="GO" id="GO:0005737">
    <property type="term" value="C:cytoplasm"/>
    <property type="evidence" value="ECO:0000318"/>
    <property type="project" value="GO_Central"/>
</dbReference>
<dbReference type="GO" id="GO:0005874">
    <property type="term" value="C:microtubule"/>
    <property type="evidence" value="ECO:0000318"/>
    <property type="project" value="GO_Central"/>
</dbReference>
<dbReference type="GO" id="GO:0005509">
    <property type="term" value="F:calcium ion binding"/>
    <property type="evidence" value="ECO:0000315"/>
    <property type="project" value="CAFA"/>
</dbReference>
<dbReference type="GO" id="GO:0005525">
    <property type="term" value="F:GTP binding"/>
    <property type="evidence" value="ECO:0000318"/>
    <property type="project" value="GO_Central"/>
</dbReference>
<dbReference type="GO" id="GO:0003924">
    <property type="term" value="F:GTPase activity"/>
    <property type="evidence" value="ECO:0007669"/>
    <property type="project" value="InterPro"/>
</dbReference>
<dbReference type="GO" id="GO:0005200">
    <property type="term" value="F:structural constituent of cytoskeleton"/>
    <property type="evidence" value="ECO:0000318"/>
    <property type="project" value="GO_Central"/>
</dbReference>
<dbReference type="GO" id="GO:0000226">
    <property type="term" value="P:microtubule cytoskeleton organization"/>
    <property type="evidence" value="ECO:0000318"/>
    <property type="project" value="GO_Central"/>
</dbReference>
<dbReference type="GO" id="GO:0000278">
    <property type="term" value="P:mitotic cell cycle"/>
    <property type="evidence" value="ECO:0000318"/>
    <property type="project" value="GO_Central"/>
</dbReference>
<dbReference type="GO" id="GO:0031115">
    <property type="term" value="P:negative regulation of microtubule polymerization"/>
    <property type="evidence" value="ECO:0000315"/>
    <property type="project" value="CAFA"/>
</dbReference>
<dbReference type="GO" id="GO:0001764">
    <property type="term" value="P:neuron migration"/>
    <property type="evidence" value="ECO:0000318"/>
    <property type="project" value="GO_Central"/>
</dbReference>
<dbReference type="CDD" id="cd02187">
    <property type="entry name" value="beta_tubulin"/>
    <property type="match status" value="1"/>
</dbReference>
<dbReference type="DisProt" id="DP00169"/>
<dbReference type="FunFam" id="1.10.287.600:FF:000006">
    <property type="entry name" value="Tubulin beta chain"/>
    <property type="match status" value="1"/>
</dbReference>
<dbReference type="FunFam" id="3.30.1330.20:FF:000002">
    <property type="entry name" value="Tubulin beta chain"/>
    <property type="match status" value="1"/>
</dbReference>
<dbReference type="FunFam" id="3.40.50.1440:FF:000003">
    <property type="entry name" value="Tubulin beta chain"/>
    <property type="match status" value="1"/>
</dbReference>
<dbReference type="Gene3D" id="1.10.287.600">
    <property type="entry name" value="Helix hairpin bin"/>
    <property type="match status" value="1"/>
</dbReference>
<dbReference type="Gene3D" id="3.30.1330.20">
    <property type="entry name" value="Tubulin/FtsZ, C-terminal domain"/>
    <property type="match status" value="1"/>
</dbReference>
<dbReference type="Gene3D" id="3.40.50.1440">
    <property type="entry name" value="Tubulin/FtsZ, GTPase domain"/>
    <property type="match status" value="1"/>
</dbReference>
<dbReference type="InterPro" id="IPR013838">
    <property type="entry name" value="Beta-tubulin_BS"/>
</dbReference>
<dbReference type="InterPro" id="IPR002453">
    <property type="entry name" value="Beta_tubulin"/>
</dbReference>
<dbReference type="InterPro" id="IPR008280">
    <property type="entry name" value="Tub_FtsZ_C"/>
</dbReference>
<dbReference type="InterPro" id="IPR000217">
    <property type="entry name" value="Tubulin"/>
</dbReference>
<dbReference type="InterPro" id="IPR037103">
    <property type="entry name" value="Tubulin/FtsZ-like_C"/>
</dbReference>
<dbReference type="InterPro" id="IPR018316">
    <property type="entry name" value="Tubulin/FtsZ_2-layer-sand-dom"/>
</dbReference>
<dbReference type="InterPro" id="IPR036525">
    <property type="entry name" value="Tubulin/FtsZ_GTPase_sf"/>
</dbReference>
<dbReference type="InterPro" id="IPR023123">
    <property type="entry name" value="Tubulin_C"/>
</dbReference>
<dbReference type="InterPro" id="IPR017975">
    <property type="entry name" value="Tubulin_CS"/>
</dbReference>
<dbReference type="InterPro" id="IPR003008">
    <property type="entry name" value="Tubulin_FtsZ_GTPase"/>
</dbReference>
<dbReference type="PANTHER" id="PTHR11588">
    <property type="entry name" value="TUBULIN"/>
    <property type="match status" value="1"/>
</dbReference>
<dbReference type="Pfam" id="PF00091">
    <property type="entry name" value="Tubulin"/>
    <property type="match status" value="1"/>
</dbReference>
<dbReference type="Pfam" id="PF03953">
    <property type="entry name" value="Tubulin_C"/>
    <property type="match status" value="1"/>
</dbReference>
<dbReference type="PRINTS" id="PR01163">
    <property type="entry name" value="BETATUBULIN"/>
</dbReference>
<dbReference type="PRINTS" id="PR01161">
    <property type="entry name" value="TUBULIN"/>
</dbReference>
<dbReference type="SMART" id="SM00864">
    <property type="entry name" value="Tubulin"/>
    <property type="match status" value="1"/>
</dbReference>
<dbReference type="SMART" id="SM00865">
    <property type="entry name" value="Tubulin_C"/>
    <property type="match status" value="1"/>
</dbReference>
<dbReference type="SUPFAM" id="SSF55307">
    <property type="entry name" value="Tubulin C-terminal domain-like"/>
    <property type="match status" value="1"/>
</dbReference>
<dbReference type="SUPFAM" id="SSF52490">
    <property type="entry name" value="Tubulin nucleotide-binding domain-like"/>
    <property type="match status" value="1"/>
</dbReference>
<dbReference type="PROSITE" id="PS00227">
    <property type="entry name" value="TUBULIN"/>
    <property type="match status" value="1"/>
</dbReference>
<dbReference type="PROSITE" id="PS00228">
    <property type="entry name" value="TUBULIN_B_AUTOREG"/>
    <property type="match status" value="1"/>
</dbReference>
<organism>
    <name type="scientific">Gallus gallus</name>
    <name type="common">Chicken</name>
    <dbReference type="NCBI Taxonomy" id="9031"/>
    <lineage>
        <taxon>Eukaryota</taxon>
        <taxon>Metazoa</taxon>
        <taxon>Chordata</taxon>
        <taxon>Craniata</taxon>
        <taxon>Vertebrata</taxon>
        <taxon>Euteleostomi</taxon>
        <taxon>Archelosauria</taxon>
        <taxon>Archosauria</taxon>
        <taxon>Dinosauria</taxon>
        <taxon>Saurischia</taxon>
        <taxon>Theropoda</taxon>
        <taxon>Coelurosauria</taxon>
        <taxon>Aves</taxon>
        <taxon>Neognathae</taxon>
        <taxon>Galloanserae</taxon>
        <taxon>Galliformes</taxon>
        <taxon>Phasianidae</taxon>
        <taxon>Phasianinae</taxon>
        <taxon>Gallus</taxon>
    </lineage>
</organism>